<feature type="chain" id="PRO_1000092688" description="Imidazoleglycerol-phosphate dehydratase">
    <location>
        <begin position="1"/>
        <end position="196"/>
    </location>
</feature>
<organism>
    <name type="scientific">Desulforudis audaxviator (strain MP104C)</name>
    <dbReference type="NCBI Taxonomy" id="477974"/>
    <lineage>
        <taxon>Bacteria</taxon>
        <taxon>Bacillati</taxon>
        <taxon>Bacillota</taxon>
        <taxon>Clostridia</taxon>
        <taxon>Thermoanaerobacterales</taxon>
        <taxon>Candidatus Desulforudaceae</taxon>
        <taxon>Candidatus Desulforudis</taxon>
    </lineage>
</organism>
<protein>
    <recommendedName>
        <fullName evidence="1">Imidazoleglycerol-phosphate dehydratase</fullName>
        <shortName evidence="1">IGPD</shortName>
        <ecNumber evidence="1">4.2.1.19</ecNumber>
    </recommendedName>
</protein>
<comment type="catalytic activity">
    <reaction evidence="1">
        <text>D-erythro-1-(imidazol-4-yl)glycerol 3-phosphate = 3-(imidazol-4-yl)-2-oxopropyl phosphate + H2O</text>
        <dbReference type="Rhea" id="RHEA:11040"/>
        <dbReference type="ChEBI" id="CHEBI:15377"/>
        <dbReference type="ChEBI" id="CHEBI:57766"/>
        <dbReference type="ChEBI" id="CHEBI:58278"/>
        <dbReference type="EC" id="4.2.1.19"/>
    </reaction>
</comment>
<comment type="pathway">
    <text evidence="1">Amino-acid biosynthesis; L-histidine biosynthesis; L-histidine from 5-phospho-alpha-D-ribose 1-diphosphate: step 6/9.</text>
</comment>
<comment type="subcellular location">
    <subcellularLocation>
        <location evidence="1">Cytoplasm</location>
    </subcellularLocation>
</comment>
<comment type="similarity">
    <text evidence="1">Belongs to the imidazoleglycerol-phosphate dehydratase family.</text>
</comment>
<proteinExistence type="inferred from homology"/>
<dbReference type="EC" id="4.2.1.19" evidence="1"/>
<dbReference type="EMBL" id="CP000860">
    <property type="protein sequence ID" value="ACA60127.1"/>
    <property type="molecule type" value="Genomic_DNA"/>
</dbReference>
<dbReference type="RefSeq" id="WP_012302708.1">
    <property type="nucleotide sequence ID" value="NC_010424.1"/>
</dbReference>
<dbReference type="SMR" id="B1I559"/>
<dbReference type="STRING" id="477974.Daud_1625"/>
<dbReference type="KEGG" id="dau:Daud_1625"/>
<dbReference type="eggNOG" id="COG0131">
    <property type="taxonomic scope" value="Bacteria"/>
</dbReference>
<dbReference type="HOGENOM" id="CLU_044308_3_0_9"/>
<dbReference type="OrthoDB" id="9790411at2"/>
<dbReference type="UniPathway" id="UPA00031">
    <property type="reaction ID" value="UER00011"/>
</dbReference>
<dbReference type="Proteomes" id="UP000008544">
    <property type="component" value="Chromosome"/>
</dbReference>
<dbReference type="GO" id="GO:0005737">
    <property type="term" value="C:cytoplasm"/>
    <property type="evidence" value="ECO:0007669"/>
    <property type="project" value="UniProtKB-SubCell"/>
</dbReference>
<dbReference type="GO" id="GO:0004424">
    <property type="term" value="F:imidazoleglycerol-phosphate dehydratase activity"/>
    <property type="evidence" value="ECO:0007669"/>
    <property type="project" value="UniProtKB-UniRule"/>
</dbReference>
<dbReference type="GO" id="GO:0000105">
    <property type="term" value="P:L-histidine biosynthetic process"/>
    <property type="evidence" value="ECO:0007669"/>
    <property type="project" value="UniProtKB-UniRule"/>
</dbReference>
<dbReference type="CDD" id="cd07914">
    <property type="entry name" value="IGPD"/>
    <property type="match status" value="1"/>
</dbReference>
<dbReference type="FunFam" id="3.30.230.40:FF:000001">
    <property type="entry name" value="Imidazoleglycerol-phosphate dehydratase HisB"/>
    <property type="match status" value="1"/>
</dbReference>
<dbReference type="FunFam" id="3.30.230.40:FF:000003">
    <property type="entry name" value="Imidazoleglycerol-phosphate dehydratase HisB"/>
    <property type="match status" value="1"/>
</dbReference>
<dbReference type="Gene3D" id="3.30.230.40">
    <property type="entry name" value="Imidazole glycerol phosphate dehydratase, domain 1"/>
    <property type="match status" value="2"/>
</dbReference>
<dbReference type="HAMAP" id="MF_00076">
    <property type="entry name" value="HisB"/>
    <property type="match status" value="1"/>
</dbReference>
<dbReference type="InterPro" id="IPR038494">
    <property type="entry name" value="IGPD_sf"/>
</dbReference>
<dbReference type="InterPro" id="IPR000807">
    <property type="entry name" value="ImidazoleglycerolP_deHydtase"/>
</dbReference>
<dbReference type="InterPro" id="IPR020565">
    <property type="entry name" value="ImidazoleglycerP_deHydtase_CS"/>
</dbReference>
<dbReference type="InterPro" id="IPR020568">
    <property type="entry name" value="Ribosomal_Su5_D2-typ_SF"/>
</dbReference>
<dbReference type="NCBIfam" id="NF002111">
    <property type="entry name" value="PRK00951.2-1"/>
    <property type="match status" value="1"/>
</dbReference>
<dbReference type="NCBIfam" id="NF002114">
    <property type="entry name" value="PRK00951.2-4"/>
    <property type="match status" value="1"/>
</dbReference>
<dbReference type="PANTHER" id="PTHR23133:SF2">
    <property type="entry name" value="IMIDAZOLEGLYCEROL-PHOSPHATE DEHYDRATASE"/>
    <property type="match status" value="1"/>
</dbReference>
<dbReference type="PANTHER" id="PTHR23133">
    <property type="entry name" value="IMIDAZOLEGLYCEROL-PHOSPHATE DEHYDRATASE HIS7"/>
    <property type="match status" value="1"/>
</dbReference>
<dbReference type="Pfam" id="PF00475">
    <property type="entry name" value="IGPD"/>
    <property type="match status" value="1"/>
</dbReference>
<dbReference type="SUPFAM" id="SSF54211">
    <property type="entry name" value="Ribosomal protein S5 domain 2-like"/>
    <property type="match status" value="2"/>
</dbReference>
<dbReference type="PROSITE" id="PS00954">
    <property type="entry name" value="IGP_DEHYDRATASE_1"/>
    <property type="match status" value="1"/>
</dbReference>
<dbReference type="PROSITE" id="PS00955">
    <property type="entry name" value="IGP_DEHYDRATASE_2"/>
    <property type="match status" value="1"/>
</dbReference>
<reference key="1">
    <citation type="submission" date="2007-10" db="EMBL/GenBank/DDBJ databases">
        <title>Complete sequence of chromosome of Desulforudis audaxviator MP104C.</title>
        <authorList>
            <person name="Copeland A."/>
            <person name="Lucas S."/>
            <person name="Lapidus A."/>
            <person name="Barry K."/>
            <person name="Glavina del Rio T."/>
            <person name="Dalin E."/>
            <person name="Tice H."/>
            <person name="Bruce D."/>
            <person name="Pitluck S."/>
            <person name="Lowry S.R."/>
            <person name="Larimer F."/>
            <person name="Land M.L."/>
            <person name="Hauser L."/>
            <person name="Kyrpides N."/>
            <person name="Ivanova N.N."/>
            <person name="Richardson P."/>
        </authorList>
    </citation>
    <scope>NUCLEOTIDE SEQUENCE [LARGE SCALE GENOMIC DNA]</scope>
    <source>
        <strain>MP104C</strain>
    </source>
</reference>
<sequence>MLIRKAEVRRQTRETEIRVQLQVDGTGEYALDTGVPFLEHMLALTAKFSGFDLQIRARGDLDVDDHHTVEDVGICLGEALVKALGDKAGIGRFGHAIVPMDDALALVAVDLSGRGYLAFDVPMPSPQVGRFDTELVEEFLRALAYNGRFNLHVRLLAGANTHHIIEAVFKGLGVALGSAARINAQRGVPSTKGVIN</sequence>
<name>HIS7_DESAP</name>
<evidence type="ECO:0000255" key="1">
    <source>
        <dbReference type="HAMAP-Rule" id="MF_00076"/>
    </source>
</evidence>
<keyword id="KW-0028">Amino-acid biosynthesis</keyword>
<keyword id="KW-0963">Cytoplasm</keyword>
<keyword id="KW-0368">Histidine biosynthesis</keyword>
<keyword id="KW-0456">Lyase</keyword>
<keyword id="KW-1185">Reference proteome</keyword>
<accession>B1I559</accession>
<gene>
    <name evidence="1" type="primary">hisB</name>
    <name type="ordered locus">Daud_1625</name>
</gene>